<organism>
    <name type="scientific">Tetraodon nigroviridis</name>
    <name type="common">Spotted green pufferfish</name>
    <name type="synonym">Chelonodon nigroviridis</name>
    <dbReference type="NCBI Taxonomy" id="99883"/>
    <lineage>
        <taxon>Eukaryota</taxon>
        <taxon>Metazoa</taxon>
        <taxon>Chordata</taxon>
        <taxon>Craniata</taxon>
        <taxon>Vertebrata</taxon>
        <taxon>Euteleostomi</taxon>
        <taxon>Actinopterygii</taxon>
        <taxon>Neopterygii</taxon>
        <taxon>Teleostei</taxon>
        <taxon>Neoteleostei</taxon>
        <taxon>Acanthomorphata</taxon>
        <taxon>Eupercaria</taxon>
        <taxon>Tetraodontiformes</taxon>
        <taxon>Tetradontoidea</taxon>
        <taxon>Tetraodontidae</taxon>
        <taxon>Tetraodon</taxon>
    </lineage>
</organism>
<accession>P58369</accession>
<accession>Q4RMZ7</accession>
<comment type="function">
    <text evidence="1">Regulates intra- and extracellular levels of inorganic pyrophosphate (PPi), probably functioning as PPi transporter.</text>
</comment>
<comment type="subcellular location">
    <subcellularLocation>
        <location evidence="1">Membrane</location>
        <topology evidence="1">Multi-pass membrane protein</topology>
    </subcellularLocation>
</comment>
<comment type="similarity">
    <text evidence="3">Belongs to the ANKH family.</text>
</comment>
<comment type="sequence caution" evidence="3">
    <conflict type="erroneous gene model prediction">
        <sequence resource="EMBL-CDS" id="CAG10235"/>
    </conflict>
</comment>
<reference key="1">
    <citation type="journal article" date="2004" name="Nature">
        <title>Genome duplication in the teleost fish Tetraodon nigroviridis reveals the early vertebrate proto-karyotype.</title>
        <authorList>
            <person name="Jaillon O."/>
            <person name="Aury J.-M."/>
            <person name="Brunet F."/>
            <person name="Petit J.-L."/>
            <person name="Stange-Thomann N."/>
            <person name="Mauceli E."/>
            <person name="Bouneau L."/>
            <person name="Fischer C."/>
            <person name="Ozouf-Costaz C."/>
            <person name="Bernot A."/>
            <person name="Nicaud S."/>
            <person name="Jaffe D."/>
            <person name="Fisher S."/>
            <person name="Lutfalla G."/>
            <person name="Dossat C."/>
            <person name="Segurens B."/>
            <person name="Dasilva C."/>
            <person name="Salanoubat M."/>
            <person name="Levy M."/>
            <person name="Boudet N."/>
            <person name="Castellano S."/>
            <person name="Anthouard V."/>
            <person name="Jubin C."/>
            <person name="Castelli V."/>
            <person name="Katinka M."/>
            <person name="Vacherie B."/>
            <person name="Biemont C."/>
            <person name="Skalli Z."/>
            <person name="Cattolico L."/>
            <person name="Poulain J."/>
            <person name="De Berardinis V."/>
            <person name="Cruaud C."/>
            <person name="Duprat S."/>
            <person name="Brottier P."/>
            <person name="Coutanceau J.-P."/>
            <person name="Gouzy J."/>
            <person name="Parra G."/>
            <person name="Lardier G."/>
            <person name="Chapple C."/>
            <person name="McKernan K.J."/>
            <person name="McEwan P."/>
            <person name="Bosak S."/>
            <person name="Kellis M."/>
            <person name="Volff J.-N."/>
            <person name="Guigo R."/>
            <person name="Zody M.C."/>
            <person name="Mesirov J."/>
            <person name="Lindblad-Toh K."/>
            <person name="Birren B."/>
            <person name="Nusbaum C."/>
            <person name="Kahn D."/>
            <person name="Robinson-Rechavi M."/>
            <person name="Laudet V."/>
            <person name="Schachter V."/>
            <person name="Quetier F."/>
            <person name="Saurin W."/>
            <person name="Scarpelli C."/>
            <person name="Wincker P."/>
            <person name="Lander E.S."/>
            <person name="Weissenbach J."/>
            <person name="Roest Crollius H."/>
        </authorList>
    </citation>
    <scope>NUCLEOTIDE SEQUENCE [LARGE SCALE GENOMIC DNA]</scope>
</reference>
<reference key="2">
    <citation type="journal article" date="2001" name="Nat. Genet.">
        <title>Heterozygous mutations in ANKH, the human ortholog of the mouse progressive ankylosis gene, result in craniometaphyseal dysplasia.</title>
        <authorList>
            <person name="Nuernberg P."/>
            <person name="Thiele H."/>
            <person name="Chandler D."/>
            <person name="Hoehne W."/>
            <person name="Cunningham M.L."/>
            <person name="Ritter H."/>
            <person name="Leschik G."/>
            <person name="Uhlmann K."/>
            <person name="Mischung C."/>
            <person name="Harrop K."/>
            <person name="Goldblatt J."/>
            <person name="Borochowitz Z.U."/>
            <person name="Kotzot D."/>
            <person name="Westermann F."/>
            <person name="Mundlos S."/>
            <person name="Braun H.-S."/>
            <person name="Laing N."/>
            <person name="Tinschert S."/>
        </authorList>
    </citation>
    <scope>NUCLEOTIDE SEQUENCE [MRNA] OF 67-421</scope>
    <source>
        <tissue>Muscle</tissue>
    </source>
</reference>
<keyword id="KW-0472">Membrane</keyword>
<keyword id="KW-0592">Phosphate transport</keyword>
<keyword id="KW-1185">Reference proteome</keyword>
<keyword id="KW-0812">Transmembrane</keyword>
<keyword id="KW-1133">Transmembrane helix</keyword>
<keyword id="KW-0813">Transport</keyword>
<proteinExistence type="evidence at transcript level"/>
<sequence>MVEFPSLSPYWPLIRFLVPLAITNVAIDLGEQALNRGIATVKEDAVEMLASYGLAYSLMKFFTGPLSDFKNVGLVFVNSKRDRRKAMFLLVTAGVTAFVLHILIAYTDLGYYIINKLHHVDESVGGKTRKAFLFLAAFPLLDALAWIHAGILLKHKYSLIVGSASISDVVAQIVFVAILLHSNLECAEPLLIPILSLYMGALVRFTIVGLGYYCNIHDNIPDTSGLDVGGDATIKKMLSFWWPLALILATQRISRPIVNLFVSRDLKGTSEATEAVAVLTATYPVGHMPYGWLTELRAVYPAFDKNNPSNKINASSPVTKSHIKKFTFCCLALSLMLCFVLFWTPHVSEKILVDVIGVDYAFAELCVVPLRIFSFFPLPVTLRAHLTAWLMTLKKTFVLAPSSVLRIIVLITSLVVLPYMGVHGATLGVGSLLAGFVGESTMVAIAACYVYRRQVSSPGWTQQLLTVYPSSVGRGSLLIRSKQLCLS</sequence>
<dbReference type="EMBL" id="CAAE01015017">
    <property type="protein sequence ID" value="CAG10235.1"/>
    <property type="status" value="ALT_SEQ"/>
    <property type="molecule type" value="Genomic_DNA"/>
</dbReference>
<dbReference type="EMBL" id="AJ302034">
    <property type="protein sequence ID" value="CAC40964.1"/>
    <property type="molecule type" value="mRNA"/>
</dbReference>
<dbReference type="SMR" id="P58369"/>
<dbReference type="FunCoup" id="P58369">
    <property type="interactions" value="315"/>
</dbReference>
<dbReference type="KEGG" id="tng:GSTEN00031805G001"/>
<dbReference type="InParanoid" id="P58369"/>
<dbReference type="OrthoDB" id="10055429at2759"/>
<dbReference type="Proteomes" id="UP000007303">
    <property type="component" value="Unassembled WGS sequence"/>
</dbReference>
<dbReference type="GO" id="GO:0005886">
    <property type="term" value="C:plasma membrane"/>
    <property type="evidence" value="ECO:0007669"/>
    <property type="project" value="TreeGrafter"/>
</dbReference>
<dbReference type="GO" id="GO:0030504">
    <property type="term" value="F:inorganic diphosphate transmembrane transporter activity"/>
    <property type="evidence" value="ECO:0007669"/>
    <property type="project" value="TreeGrafter"/>
</dbReference>
<dbReference type="GO" id="GO:0005315">
    <property type="term" value="F:phosphate transmembrane transporter activity"/>
    <property type="evidence" value="ECO:0007669"/>
    <property type="project" value="InterPro"/>
</dbReference>
<dbReference type="GO" id="GO:0035435">
    <property type="term" value="P:phosphate ion transmembrane transport"/>
    <property type="evidence" value="ECO:0007669"/>
    <property type="project" value="InterPro"/>
</dbReference>
<dbReference type="InterPro" id="IPR009887">
    <property type="entry name" value="ANKH"/>
</dbReference>
<dbReference type="PANTHER" id="PTHR28384">
    <property type="entry name" value="PROGRESSIVE ANKYLOSIS PROTEIN HOMOLOG"/>
    <property type="match status" value="1"/>
</dbReference>
<dbReference type="PANTHER" id="PTHR28384:SF1">
    <property type="entry name" value="PROGRESSIVE ANKYLOSIS PROTEIN HOMOLOG"/>
    <property type="match status" value="1"/>
</dbReference>
<dbReference type="Pfam" id="PF07260">
    <property type="entry name" value="ANKH"/>
    <property type="match status" value="1"/>
</dbReference>
<gene>
    <name type="primary">ankh</name>
    <name type="ORF">GSTENG00031805001</name>
</gene>
<feature type="chain" id="PRO_0000137472" description="Progressive ankylosis protein homolog">
    <location>
        <begin position="1"/>
        <end position="487"/>
    </location>
</feature>
<feature type="transmembrane region" description="Helical" evidence="2">
    <location>
        <begin position="7"/>
        <end position="27"/>
    </location>
</feature>
<feature type="transmembrane region" description="Helical" evidence="2">
    <location>
        <begin position="86"/>
        <end position="106"/>
    </location>
</feature>
<feature type="transmembrane region" description="Helical" evidence="2">
    <location>
        <begin position="132"/>
        <end position="152"/>
    </location>
</feature>
<feature type="transmembrane region" description="Helical" evidence="2">
    <location>
        <begin position="159"/>
        <end position="179"/>
    </location>
</feature>
<feature type="transmembrane region" description="Helical" evidence="2">
    <location>
        <begin position="190"/>
        <end position="210"/>
    </location>
</feature>
<feature type="transmembrane region" description="Helical" evidence="2">
    <location>
        <begin position="326"/>
        <end position="346"/>
    </location>
</feature>
<feature type="transmembrane region" description="Helical" evidence="2">
    <location>
        <begin position="362"/>
        <end position="382"/>
    </location>
</feature>
<feature type="transmembrane region" description="Helical" evidence="2">
    <location>
        <begin position="407"/>
        <end position="427"/>
    </location>
</feature>
<feature type="transmembrane region" description="Helical" evidence="2">
    <location>
        <begin position="428"/>
        <end position="448"/>
    </location>
</feature>
<evidence type="ECO:0000250" key="1"/>
<evidence type="ECO:0000255" key="2"/>
<evidence type="ECO:0000305" key="3"/>
<name>ANKH_TETNG</name>
<protein>
    <recommendedName>
        <fullName>Progressive ankylosis protein homolog</fullName>
        <shortName>ANK</shortName>
    </recommendedName>
</protein>